<name>MCSB_STAS1</name>
<sequence length="336" mass="38756">MSKNDISAYMSEWMRDREESPIVMSSRIRLARNLENHVHPLMFLSEQDGFRIINEVQDALPDLAVQRLDAMDQQSKYKLVAKHLISPELIRQPASAVLLNEDESLSIMVNEEDHLRIQAMGNDLSLSSLYEKASEIDDKLDSELDVSFDETLGYLTTCPTNIGTGMRASVMLHLPGLTIMKRMNRIAQTINRFGFTIRGIYGEGSHVYGHIYQISNQLTLGKTEEDIIESLSEVVQQIINEEMQIRERLNRHNYTETLDRVYRSLGILKYSRLISMEEASLRLSEVKLGIDLEYIELEDFKFNELMVAIQSPFLLDDEDDRTVNEKRADILREHIN</sequence>
<proteinExistence type="inferred from homology"/>
<comment type="function">
    <text evidence="1">Catalyzes the specific phosphorylation of arginine residues in proteins.</text>
</comment>
<comment type="catalytic activity">
    <reaction evidence="1">
        <text>L-arginyl-[protein] + ATP = N(omega)-phospho-L-arginyl-[protein] + ADP + H(+)</text>
        <dbReference type="Rhea" id="RHEA:43384"/>
        <dbReference type="Rhea" id="RHEA-COMP:10532"/>
        <dbReference type="Rhea" id="RHEA-COMP:10533"/>
        <dbReference type="ChEBI" id="CHEBI:15378"/>
        <dbReference type="ChEBI" id="CHEBI:29965"/>
        <dbReference type="ChEBI" id="CHEBI:30616"/>
        <dbReference type="ChEBI" id="CHEBI:83226"/>
        <dbReference type="ChEBI" id="CHEBI:456216"/>
        <dbReference type="EC" id="2.7.14.1"/>
    </reaction>
</comment>
<comment type="similarity">
    <text evidence="1">Belongs to the ATP:guanido phosphotransferase family.</text>
</comment>
<dbReference type="EC" id="2.7.14.1" evidence="1"/>
<dbReference type="EMBL" id="AP008934">
    <property type="protein sequence ID" value="BAE19377.1"/>
    <property type="molecule type" value="Genomic_DNA"/>
</dbReference>
<dbReference type="RefSeq" id="WP_011303852.1">
    <property type="nucleotide sequence ID" value="NZ_MTGA01000039.1"/>
</dbReference>
<dbReference type="SMR" id="Q49V33"/>
<dbReference type="GeneID" id="3615562"/>
<dbReference type="KEGG" id="ssp:SSP2232"/>
<dbReference type="PATRIC" id="fig|342451.11.peg.2223"/>
<dbReference type="eggNOG" id="COG3869">
    <property type="taxonomic scope" value="Bacteria"/>
</dbReference>
<dbReference type="HOGENOM" id="CLU_066591_1_0_9"/>
<dbReference type="Proteomes" id="UP000006371">
    <property type="component" value="Chromosome"/>
</dbReference>
<dbReference type="GO" id="GO:0005615">
    <property type="term" value="C:extracellular space"/>
    <property type="evidence" value="ECO:0007669"/>
    <property type="project" value="TreeGrafter"/>
</dbReference>
<dbReference type="GO" id="GO:0005524">
    <property type="term" value="F:ATP binding"/>
    <property type="evidence" value="ECO:0007669"/>
    <property type="project" value="UniProtKB-KW"/>
</dbReference>
<dbReference type="GO" id="GO:0004111">
    <property type="term" value="F:creatine kinase activity"/>
    <property type="evidence" value="ECO:0007669"/>
    <property type="project" value="InterPro"/>
</dbReference>
<dbReference type="GO" id="GO:0004672">
    <property type="term" value="F:protein kinase activity"/>
    <property type="evidence" value="ECO:0007669"/>
    <property type="project" value="UniProtKB-UniRule"/>
</dbReference>
<dbReference type="GO" id="GO:0046314">
    <property type="term" value="P:phosphocreatine biosynthetic process"/>
    <property type="evidence" value="ECO:0007669"/>
    <property type="project" value="InterPro"/>
</dbReference>
<dbReference type="CDD" id="cd07930">
    <property type="entry name" value="bacterial_phosphagen_kinase"/>
    <property type="match status" value="1"/>
</dbReference>
<dbReference type="FunFam" id="3.30.590.10:FF:000007">
    <property type="entry name" value="Protein-arginine kinase"/>
    <property type="match status" value="1"/>
</dbReference>
<dbReference type="Gene3D" id="3.30.590.10">
    <property type="entry name" value="Glutamine synthetase/guanido kinase, catalytic domain"/>
    <property type="match status" value="1"/>
</dbReference>
<dbReference type="HAMAP" id="MF_00602">
    <property type="entry name" value="Prot_Arg_kinase"/>
    <property type="match status" value="1"/>
</dbReference>
<dbReference type="InterPro" id="IPR023660">
    <property type="entry name" value="Arg_Kinase"/>
</dbReference>
<dbReference type="InterPro" id="IPR000749">
    <property type="entry name" value="ATP-guanido_PTrfase"/>
</dbReference>
<dbReference type="InterPro" id="IPR022415">
    <property type="entry name" value="ATP-guanido_PTrfase_AS"/>
</dbReference>
<dbReference type="InterPro" id="IPR022414">
    <property type="entry name" value="ATP-guanido_PTrfase_cat"/>
</dbReference>
<dbReference type="InterPro" id="IPR014746">
    <property type="entry name" value="Gln_synth/guanido_kin_cat_dom"/>
</dbReference>
<dbReference type="NCBIfam" id="NF002193">
    <property type="entry name" value="PRK01059.1-3"/>
    <property type="match status" value="1"/>
</dbReference>
<dbReference type="PANTHER" id="PTHR11547:SF38">
    <property type="entry name" value="ARGININE KINASE 1-RELATED"/>
    <property type="match status" value="1"/>
</dbReference>
<dbReference type="PANTHER" id="PTHR11547">
    <property type="entry name" value="ARGININE OR CREATINE KINASE"/>
    <property type="match status" value="1"/>
</dbReference>
<dbReference type="Pfam" id="PF00217">
    <property type="entry name" value="ATP-gua_Ptrans"/>
    <property type="match status" value="1"/>
</dbReference>
<dbReference type="SUPFAM" id="SSF55931">
    <property type="entry name" value="Glutamine synthetase/guanido kinase"/>
    <property type="match status" value="1"/>
</dbReference>
<dbReference type="PROSITE" id="PS00112">
    <property type="entry name" value="PHOSPHAGEN_KINASE"/>
    <property type="match status" value="1"/>
</dbReference>
<dbReference type="PROSITE" id="PS51510">
    <property type="entry name" value="PHOSPHAGEN_KINASE_C"/>
    <property type="match status" value="1"/>
</dbReference>
<accession>Q49V33</accession>
<reference key="1">
    <citation type="journal article" date="2005" name="Proc. Natl. Acad. Sci. U.S.A.">
        <title>Whole genome sequence of Staphylococcus saprophyticus reveals the pathogenesis of uncomplicated urinary tract infection.</title>
        <authorList>
            <person name="Kuroda M."/>
            <person name="Yamashita A."/>
            <person name="Hirakawa H."/>
            <person name="Kumano M."/>
            <person name="Morikawa K."/>
            <person name="Higashide M."/>
            <person name="Maruyama A."/>
            <person name="Inose Y."/>
            <person name="Matoba K."/>
            <person name="Toh H."/>
            <person name="Kuhara S."/>
            <person name="Hattori M."/>
            <person name="Ohta T."/>
        </authorList>
    </citation>
    <scope>NUCLEOTIDE SEQUENCE [LARGE SCALE GENOMIC DNA]</scope>
    <source>
        <strain>ATCC 15305 / DSM 20229 / NCIMB 8711 / NCTC 7292 / S-41</strain>
    </source>
</reference>
<keyword id="KW-0067">ATP-binding</keyword>
<keyword id="KW-0418">Kinase</keyword>
<keyword id="KW-0547">Nucleotide-binding</keyword>
<keyword id="KW-1185">Reference proteome</keyword>
<keyword id="KW-0808">Transferase</keyword>
<gene>
    <name evidence="1" type="primary">mcsB</name>
    <name type="ordered locus">SSP2232</name>
</gene>
<evidence type="ECO:0000255" key="1">
    <source>
        <dbReference type="HAMAP-Rule" id="MF_00602"/>
    </source>
</evidence>
<protein>
    <recommendedName>
        <fullName evidence="1">Protein-arginine kinase</fullName>
        <ecNumber evidence="1">2.7.14.1</ecNumber>
    </recommendedName>
</protein>
<feature type="chain" id="PRO_0000212037" description="Protein-arginine kinase">
    <location>
        <begin position="1"/>
        <end position="336"/>
    </location>
</feature>
<feature type="domain" description="Phosphagen kinase C-terminal" evidence="1">
    <location>
        <begin position="22"/>
        <end position="245"/>
    </location>
</feature>
<feature type="binding site" evidence="1">
    <location>
        <begin position="25"/>
        <end position="29"/>
    </location>
    <ligand>
        <name>ATP</name>
        <dbReference type="ChEBI" id="CHEBI:30616"/>
    </ligand>
</feature>
<feature type="binding site" evidence="1">
    <location>
        <position position="83"/>
    </location>
    <ligand>
        <name>ATP</name>
        <dbReference type="ChEBI" id="CHEBI:30616"/>
    </ligand>
</feature>
<feature type="binding site" evidence="1">
    <location>
        <position position="116"/>
    </location>
    <ligand>
        <name>ATP</name>
        <dbReference type="ChEBI" id="CHEBI:30616"/>
    </ligand>
</feature>
<feature type="binding site" evidence="1">
    <location>
        <begin position="167"/>
        <end position="171"/>
    </location>
    <ligand>
        <name>ATP</name>
        <dbReference type="ChEBI" id="CHEBI:30616"/>
    </ligand>
</feature>
<feature type="binding site" evidence="1">
    <location>
        <begin position="198"/>
        <end position="203"/>
    </location>
    <ligand>
        <name>ATP</name>
        <dbReference type="ChEBI" id="CHEBI:30616"/>
    </ligand>
</feature>
<organism>
    <name type="scientific">Staphylococcus saprophyticus subsp. saprophyticus (strain ATCC 15305 / DSM 20229 / NCIMB 8711 / NCTC 7292 / S-41)</name>
    <dbReference type="NCBI Taxonomy" id="342451"/>
    <lineage>
        <taxon>Bacteria</taxon>
        <taxon>Bacillati</taxon>
        <taxon>Bacillota</taxon>
        <taxon>Bacilli</taxon>
        <taxon>Bacillales</taxon>
        <taxon>Staphylococcaceae</taxon>
        <taxon>Staphylococcus</taxon>
    </lineage>
</organism>